<sequence length="98" mass="10830">MNNINDLRLNNNISNTNKSQNSTGIGDEFAKMLKNEINDLNKAQESGEAAMTDIATGQVKDLHQAAIAITKAESSMKFMLEVRNKAISAYKEITRTQI</sequence>
<name>FLIE_CAMJE</name>
<evidence type="ECO:0000255" key="1">
    <source>
        <dbReference type="HAMAP-Rule" id="MF_00724"/>
    </source>
</evidence>
<evidence type="ECO:0000256" key="2">
    <source>
        <dbReference type="SAM" id="MobiDB-lite"/>
    </source>
</evidence>
<protein>
    <recommendedName>
        <fullName evidence="1">Flagellar hook-basal body complex protein FliE</fullName>
    </recommendedName>
</protein>
<reference key="1">
    <citation type="journal article" date="2000" name="Nature">
        <title>The genome sequence of the food-borne pathogen Campylobacter jejuni reveals hypervariable sequences.</title>
        <authorList>
            <person name="Parkhill J."/>
            <person name="Wren B.W."/>
            <person name="Mungall K.L."/>
            <person name="Ketley J.M."/>
            <person name="Churcher C.M."/>
            <person name="Basham D."/>
            <person name="Chillingworth T."/>
            <person name="Davies R.M."/>
            <person name="Feltwell T."/>
            <person name="Holroyd S."/>
            <person name="Jagels K."/>
            <person name="Karlyshev A.V."/>
            <person name="Moule S."/>
            <person name="Pallen M.J."/>
            <person name="Penn C.W."/>
            <person name="Quail M.A."/>
            <person name="Rajandream M.A."/>
            <person name="Rutherford K.M."/>
            <person name="van Vliet A.H.M."/>
            <person name="Whitehead S."/>
            <person name="Barrell B.G."/>
        </authorList>
    </citation>
    <scope>NUCLEOTIDE SEQUENCE [LARGE SCALE GENOMIC DNA]</scope>
    <source>
        <strain>ATCC 700819 / NCTC 11168</strain>
    </source>
</reference>
<organism>
    <name type="scientific">Campylobacter jejuni subsp. jejuni serotype O:2 (strain ATCC 700819 / NCTC 11168)</name>
    <dbReference type="NCBI Taxonomy" id="192222"/>
    <lineage>
        <taxon>Bacteria</taxon>
        <taxon>Pseudomonadati</taxon>
        <taxon>Campylobacterota</taxon>
        <taxon>Epsilonproteobacteria</taxon>
        <taxon>Campylobacterales</taxon>
        <taxon>Campylobacteraceae</taxon>
        <taxon>Campylobacter</taxon>
    </lineage>
</organism>
<keyword id="KW-0975">Bacterial flagellum</keyword>
<keyword id="KW-1185">Reference proteome</keyword>
<dbReference type="EMBL" id="AL111168">
    <property type="protein sequence ID" value="CAL34672.1"/>
    <property type="molecule type" value="Genomic_DNA"/>
</dbReference>
<dbReference type="PIR" id="F81398">
    <property type="entry name" value="F81398"/>
</dbReference>
<dbReference type="RefSeq" id="WP_002851122.1">
    <property type="nucleotide sequence ID" value="NZ_SZUC01000002.1"/>
</dbReference>
<dbReference type="RefSeq" id="YP_002343957.1">
    <property type="nucleotide sequence ID" value="NC_002163.1"/>
</dbReference>
<dbReference type="SMR" id="Q9PHY8"/>
<dbReference type="IntAct" id="Q9PHY8">
    <property type="interactions" value="4"/>
</dbReference>
<dbReference type="STRING" id="192222.Cj0526c"/>
<dbReference type="PaxDb" id="192222-Cj0526c"/>
<dbReference type="EnsemblBacteria" id="CAL34672">
    <property type="protein sequence ID" value="CAL34672"/>
    <property type="gene ID" value="Cj0526c"/>
</dbReference>
<dbReference type="GeneID" id="904854"/>
<dbReference type="KEGG" id="cje:Cj0526c"/>
<dbReference type="PATRIC" id="fig|192222.6.peg.518"/>
<dbReference type="eggNOG" id="COG1677">
    <property type="taxonomic scope" value="Bacteria"/>
</dbReference>
<dbReference type="HOGENOM" id="CLU_147249_3_1_7"/>
<dbReference type="OrthoDB" id="285952at2"/>
<dbReference type="Proteomes" id="UP000000799">
    <property type="component" value="Chromosome"/>
</dbReference>
<dbReference type="GO" id="GO:0009425">
    <property type="term" value="C:bacterial-type flagellum basal body"/>
    <property type="evidence" value="ECO:0007669"/>
    <property type="project" value="UniProtKB-SubCell"/>
</dbReference>
<dbReference type="GO" id="GO:0003774">
    <property type="term" value="F:cytoskeletal motor activity"/>
    <property type="evidence" value="ECO:0007669"/>
    <property type="project" value="InterPro"/>
</dbReference>
<dbReference type="GO" id="GO:0005198">
    <property type="term" value="F:structural molecule activity"/>
    <property type="evidence" value="ECO:0007669"/>
    <property type="project" value="InterPro"/>
</dbReference>
<dbReference type="GO" id="GO:0071973">
    <property type="term" value="P:bacterial-type flagellum-dependent cell motility"/>
    <property type="evidence" value="ECO:0007669"/>
    <property type="project" value="InterPro"/>
</dbReference>
<dbReference type="HAMAP" id="MF_00724">
    <property type="entry name" value="FliE"/>
    <property type="match status" value="1"/>
</dbReference>
<dbReference type="InterPro" id="IPR001624">
    <property type="entry name" value="FliE"/>
</dbReference>
<dbReference type="NCBIfam" id="TIGR00205">
    <property type="entry name" value="fliE"/>
    <property type="match status" value="1"/>
</dbReference>
<dbReference type="PANTHER" id="PTHR34653">
    <property type="match status" value="1"/>
</dbReference>
<dbReference type="PANTHER" id="PTHR34653:SF1">
    <property type="entry name" value="FLAGELLAR HOOK-BASAL BODY COMPLEX PROTEIN FLIE"/>
    <property type="match status" value="1"/>
</dbReference>
<dbReference type="Pfam" id="PF02049">
    <property type="entry name" value="FliE"/>
    <property type="match status" value="1"/>
</dbReference>
<dbReference type="PRINTS" id="PR01006">
    <property type="entry name" value="FLGHOOKFLIE"/>
</dbReference>
<gene>
    <name evidence="1" type="primary">fliE</name>
    <name type="ordered locus">Cj0526c</name>
</gene>
<proteinExistence type="inferred from homology"/>
<comment type="subcellular location">
    <subcellularLocation>
        <location evidence="1">Bacterial flagellum basal body</location>
    </subcellularLocation>
</comment>
<comment type="similarity">
    <text evidence="1">Belongs to the FliE family.</text>
</comment>
<feature type="chain" id="PRO_0000105539" description="Flagellar hook-basal body complex protein FliE">
    <location>
        <begin position="1"/>
        <end position="98"/>
    </location>
</feature>
<feature type="region of interest" description="Disordered" evidence="2">
    <location>
        <begin position="1"/>
        <end position="24"/>
    </location>
</feature>
<feature type="compositionally biased region" description="Low complexity" evidence="2">
    <location>
        <begin position="1"/>
        <end position="23"/>
    </location>
</feature>
<accession>Q9PHY8</accession>
<accession>Q0PAZ0</accession>